<name>ERCC3_DANRE</name>
<accession>Q7ZVV1</accession>
<sequence>MGRKDKSDREKKSKKRYYEDEEEDEEVIGGESQEAVPAAAGKQVDESSTKLDEYGAKDYRLQMLLKNDHSSRPLWVAPDGHIFLEAFSPVYKYAQDFLVAISEPVCRPTHAHEYKLTAYSLYAAVSVGLQTSDIIEYLQKLSKTSVPDGIVQFIKLCTVSYGKVKLVLKHNRYFVESAFPDVIQRLLQDTVIRDCRLRSAEGEETELITETISSKSAISKSQQDNGGPSSSQPADGQRSGTQVPEDIFSYYEQMDKEEEEEEETQTVSFEIRQEMIEELQKRCIQLEYPLLAEYDFRNDTVNPDINMDLKPTAVLRPYQEKSLRKMFGNGRARSGVIVLPCGAGKSLVGVTAACTVRKRCLVLGNSSVSVEQWKAQFKMWSTIDDSQICRFTSDAKDKPIGCSVAISTYSMLGHTTKRSWEAERVMEWMKSQEWGLIILDEVHTIPAKMFRRVLTIVQAHCKLGLTATLVREDDKIVDLNFLIGPKLYEANWMELQNNGYIAKVQCAEVWCPMSPEFYREYVAIKTKKRILLYTMNPNKFRACQFLIRFHERRNDKIIVFADNVFALKEYAIRLNKPYIYGPTSQGERMQILQNFKHNPKINTIFISKVGDTSFDLPEANVLIQISSHGGSRRQEAQRLGRVLRAKKGMVAEEYNAYFYSLVSQDTQEMAYSTKRQRFLVDQGYSFKVITKLAGMEEEDLMFSTRDEQQQLLQKVLAASDLDAEEEVVMGEVGGKPQFSRRAGTMSSMSGADDALYMEYQMPRGSKASVGKNIHPLFKRFRK</sequence>
<dbReference type="EC" id="5.6.2.4" evidence="7"/>
<dbReference type="EMBL" id="BC045400">
    <property type="protein sequence ID" value="AAH45400.1"/>
    <property type="molecule type" value="mRNA"/>
</dbReference>
<dbReference type="RefSeq" id="NP_963876.1">
    <property type="nucleotide sequence ID" value="NM_201582.1"/>
</dbReference>
<dbReference type="SMR" id="Q7ZVV1"/>
<dbReference type="FunCoup" id="Q7ZVV1">
    <property type="interactions" value="2477"/>
</dbReference>
<dbReference type="STRING" id="7955.ENSDARP00000010637"/>
<dbReference type="PaxDb" id="7955-ENSDARP00000105166"/>
<dbReference type="GeneID" id="324323"/>
<dbReference type="KEGG" id="dre:324323"/>
<dbReference type="AGR" id="ZFIN:ZDB-GENE-030131-3043"/>
<dbReference type="CTD" id="2071"/>
<dbReference type="ZFIN" id="ZDB-GENE-030131-3043">
    <property type="gene designation" value="ercc3"/>
</dbReference>
<dbReference type="eggNOG" id="KOG0159">
    <property type="taxonomic scope" value="Eukaryota"/>
</dbReference>
<dbReference type="eggNOG" id="KOG1123">
    <property type="taxonomic scope" value="Eukaryota"/>
</dbReference>
<dbReference type="InParanoid" id="Q7ZVV1"/>
<dbReference type="OrthoDB" id="10262986at2759"/>
<dbReference type="PhylomeDB" id="Q7ZVV1"/>
<dbReference type="Reactome" id="R-DRE-5696395">
    <property type="pathway name" value="Formation of Incision Complex in GG-NER"/>
</dbReference>
<dbReference type="Reactome" id="R-DRE-5696400">
    <property type="pathway name" value="Dual Incision in GG-NER"/>
</dbReference>
<dbReference type="Reactome" id="R-DRE-6781823">
    <property type="pathway name" value="Formation of TC-NER Pre-Incision Complex"/>
</dbReference>
<dbReference type="Reactome" id="R-DRE-6782135">
    <property type="pathway name" value="Dual incision in TC-NER"/>
</dbReference>
<dbReference type="Reactome" id="R-DRE-6796648">
    <property type="pathway name" value="TP53 Regulates Transcription of DNA Repair Genes"/>
</dbReference>
<dbReference type="Reactome" id="R-DRE-72086">
    <property type="pathway name" value="mRNA Capping"/>
</dbReference>
<dbReference type="Reactome" id="R-DRE-77075">
    <property type="pathway name" value="RNA Pol II CTD phosphorylation and interaction with CE"/>
</dbReference>
<dbReference type="PRO" id="PR:Q7ZVV1"/>
<dbReference type="Proteomes" id="UP000000437">
    <property type="component" value="Chromosome 6"/>
</dbReference>
<dbReference type="GO" id="GO:0000112">
    <property type="term" value="C:nucleotide-excision repair factor 3 complex"/>
    <property type="evidence" value="ECO:0000318"/>
    <property type="project" value="GO_Central"/>
</dbReference>
<dbReference type="GO" id="GO:0005675">
    <property type="term" value="C:transcription factor TFIIH holo complex"/>
    <property type="evidence" value="ECO:0000250"/>
    <property type="project" value="UniProtKB"/>
</dbReference>
<dbReference type="GO" id="GO:0097550">
    <property type="term" value="C:transcription preinitiation complex"/>
    <property type="evidence" value="ECO:0000318"/>
    <property type="project" value="GO_Central"/>
</dbReference>
<dbReference type="GO" id="GO:0043138">
    <property type="term" value="F:3'-5' DNA helicase activity"/>
    <property type="evidence" value="ECO:0000250"/>
    <property type="project" value="UniProtKB"/>
</dbReference>
<dbReference type="GO" id="GO:0005524">
    <property type="term" value="F:ATP binding"/>
    <property type="evidence" value="ECO:0007669"/>
    <property type="project" value="UniProtKB-KW"/>
</dbReference>
<dbReference type="GO" id="GO:0016887">
    <property type="term" value="F:ATP hydrolysis activity"/>
    <property type="evidence" value="ECO:0007669"/>
    <property type="project" value="RHEA"/>
</dbReference>
<dbReference type="GO" id="GO:0003677">
    <property type="term" value="F:DNA binding"/>
    <property type="evidence" value="ECO:0007669"/>
    <property type="project" value="UniProtKB-KW"/>
</dbReference>
<dbReference type="GO" id="GO:0006915">
    <property type="term" value="P:apoptotic process"/>
    <property type="evidence" value="ECO:0000250"/>
    <property type="project" value="UniProtKB"/>
</dbReference>
<dbReference type="GO" id="GO:0006265">
    <property type="term" value="P:DNA topological change"/>
    <property type="evidence" value="ECO:0000250"/>
    <property type="project" value="UniProtKB"/>
</dbReference>
<dbReference type="GO" id="GO:0006366">
    <property type="term" value="P:transcription by RNA polymerase II"/>
    <property type="evidence" value="ECO:0000250"/>
    <property type="project" value="UniProtKB"/>
</dbReference>
<dbReference type="GO" id="GO:0006367">
    <property type="term" value="P:transcription initiation at RNA polymerase II promoter"/>
    <property type="evidence" value="ECO:0000318"/>
    <property type="project" value="GO_Central"/>
</dbReference>
<dbReference type="GO" id="GO:0006283">
    <property type="term" value="P:transcription-coupled nucleotide-excision repair"/>
    <property type="evidence" value="ECO:0000250"/>
    <property type="project" value="UniProtKB"/>
</dbReference>
<dbReference type="CDD" id="cd18029">
    <property type="entry name" value="DEXHc_XPB"/>
    <property type="match status" value="1"/>
</dbReference>
<dbReference type="CDD" id="cd18789">
    <property type="entry name" value="SF2_C_XPB"/>
    <property type="match status" value="1"/>
</dbReference>
<dbReference type="FunFam" id="3.40.50.300:FF:000077">
    <property type="entry name" value="Probable DNA repair helicase RAD25"/>
    <property type="match status" value="1"/>
</dbReference>
<dbReference type="FunFam" id="3.40.50.300:FF:000117">
    <property type="entry name" value="Putative DNA repair helicase rad25"/>
    <property type="match status" value="1"/>
</dbReference>
<dbReference type="Gene3D" id="3.40.50.300">
    <property type="entry name" value="P-loop containing nucleotide triphosphate hydrolases"/>
    <property type="match status" value="2"/>
</dbReference>
<dbReference type="InterPro" id="IPR050615">
    <property type="entry name" value="ATP-dep_DNA_Helicase"/>
</dbReference>
<dbReference type="InterPro" id="IPR032438">
    <property type="entry name" value="ERCC3_RAD25_C"/>
</dbReference>
<dbReference type="InterPro" id="IPR006935">
    <property type="entry name" value="Helicase/UvrB_N"/>
</dbReference>
<dbReference type="InterPro" id="IPR014001">
    <property type="entry name" value="Helicase_ATP-bd"/>
</dbReference>
<dbReference type="InterPro" id="IPR001650">
    <property type="entry name" value="Helicase_C-like"/>
</dbReference>
<dbReference type="InterPro" id="IPR027417">
    <property type="entry name" value="P-loop_NTPase"/>
</dbReference>
<dbReference type="InterPro" id="IPR001161">
    <property type="entry name" value="XPB/Ssl2"/>
</dbReference>
<dbReference type="InterPro" id="IPR032830">
    <property type="entry name" value="XPB/Ssl2_N"/>
</dbReference>
<dbReference type="NCBIfam" id="TIGR00603">
    <property type="entry name" value="rad25"/>
    <property type="match status" value="1"/>
</dbReference>
<dbReference type="PANTHER" id="PTHR11274:SF0">
    <property type="entry name" value="GENERAL TRANSCRIPTION AND DNA REPAIR FACTOR IIH HELICASE SUBUNIT XPB"/>
    <property type="match status" value="1"/>
</dbReference>
<dbReference type="PANTHER" id="PTHR11274">
    <property type="entry name" value="RAD25/XP-B DNA REPAIR HELICASE"/>
    <property type="match status" value="1"/>
</dbReference>
<dbReference type="Pfam" id="PF16203">
    <property type="entry name" value="ERCC3_RAD25_C"/>
    <property type="match status" value="1"/>
</dbReference>
<dbReference type="Pfam" id="PF13625">
    <property type="entry name" value="Helicase_C_3"/>
    <property type="match status" value="1"/>
</dbReference>
<dbReference type="Pfam" id="PF04851">
    <property type="entry name" value="ResIII"/>
    <property type="match status" value="1"/>
</dbReference>
<dbReference type="PRINTS" id="PR00851">
    <property type="entry name" value="XRODRMPGMNTB"/>
</dbReference>
<dbReference type="SMART" id="SM00487">
    <property type="entry name" value="DEXDc"/>
    <property type="match status" value="1"/>
</dbReference>
<dbReference type="SMART" id="SM00490">
    <property type="entry name" value="HELICc"/>
    <property type="match status" value="1"/>
</dbReference>
<dbReference type="SUPFAM" id="SSF52540">
    <property type="entry name" value="P-loop containing nucleoside triphosphate hydrolases"/>
    <property type="match status" value="2"/>
</dbReference>
<dbReference type="PROSITE" id="PS51192">
    <property type="entry name" value="HELICASE_ATP_BIND_1"/>
    <property type="match status" value="1"/>
</dbReference>
<dbReference type="PROSITE" id="PS51194">
    <property type="entry name" value="HELICASE_CTER"/>
    <property type="match status" value="1"/>
</dbReference>
<evidence type="ECO:0000250" key="1"/>
<evidence type="ECO:0000250" key="2">
    <source>
        <dbReference type="UniProtKB" id="P19447"/>
    </source>
</evidence>
<evidence type="ECO:0000255" key="3"/>
<evidence type="ECO:0000255" key="4">
    <source>
        <dbReference type="PROSITE-ProRule" id="PRU00541"/>
    </source>
</evidence>
<evidence type="ECO:0000255" key="5">
    <source>
        <dbReference type="PROSITE-ProRule" id="PRU00542"/>
    </source>
</evidence>
<evidence type="ECO:0000256" key="6">
    <source>
        <dbReference type="SAM" id="MobiDB-lite"/>
    </source>
</evidence>
<evidence type="ECO:0000305" key="7"/>
<keyword id="KW-0067">ATP-binding</keyword>
<keyword id="KW-0227">DNA damage</keyword>
<keyword id="KW-0234">DNA repair</keyword>
<keyword id="KW-0238">DNA-binding</keyword>
<keyword id="KW-0347">Helicase</keyword>
<keyword id="KW-0378">Hydrolase</keyword>
<keyword id="KW-0413">Isomerase</keyword>
<keyword id="KW-0547">Nucleotide-binding</keyword>
<keyword id="KW-0539">Nucleus</keyword>
<keyword id="KW-1185">Reference proteome</keyword>
<keyword id="KW-0804">Transcription</keyword>
<keyword id="KW-0805">Transcription regulation</keyword>
<feature type="chain" id="PRO_0000323744" description="General transcription and DNA repair factor IIH helicase/translocase subunit XPB">
    <location>
        <begin position="1"/>
        <end position="782"/>
    </location>
</feature>
<feature type="domain" description="Helicase ATP-binding" evidence="4">
    <location>
        <begin position="326"/>
        <end position="487"/>
    </location>
</feature>
<feature type="domain" description="Helicase C-terminal" evidence="5">
    <location>
        <begin position="541"/>
        <end position="701"/>
    </location>
</feature>
<feature type="region of interest" description="Disordered" evidence="6">
    <location>
        <begin position="1"/>
        <end position="47"/>
    </location>
</feature>
<feature type="region of interest" description="Disordered" evidence="6">
    <location>
        <begin position="211"/>
        <end position="242"/>
    </location>
</feature>
<feature type="short sequence motif" description="Nuclear localization signal" evidence="3">
    <location>
        <begin position="6"/>
        <end position="17"/>
    </location>
</feature>
<feature type="short sequence motif" description="DEVH box">
    <location>
        <begin position="440"/>
        <end position="443"/>
    </location>
</feature>
<feature type="compositionally biased region" description="Basic and acidic residues" evidence="6">
    <location>
        <begin position="1"/>
        <end position="11"/>
    </location>
</feature>
<feature type="compositionally biased region" description="Acidic residues" evidence="6">
    <location>
        <begin position="19"/>
        <end position="28"/>
    </location>
</feature>
<feature type="compositionally biased region" description="Low complexity" evidence="6">
    <location>
        <begin position="211"/>
        <end position="223"/>
    </location>
</feature>
<feature type="compositionally biased region" description="Polar residues" evidence="6">
    <location>
        <begin position="224"/>
        <end position="242"/>
    </location>
</feature>
<feature type="binding site" evidence="4">
    <location>
        <begin position="339"/>
        <end position="346"/>
    </location>
    <ligand>
        <name>ATP</name>
        <dbReference type="ChEBI" id="CHEBI:30616"/>
    </ligand>
</feature>
<reference key="1">
    <citation type="submission" date="2003-01" db="EMBL/GenBank/DDBJ databases">
        <authorList>
            <consortium name="NIH - Zebrafish Gene Collection (ZGC) project"/>
        </authorList>
    </citation>
    <scope>NUCLEOTIDE SEQUENCE [LARGE SCALE MRNA]</scope>
    <source>
        <strain>AB</strain>
    </source>
</reference>
<proteinExistence type="evidence at transcript level"/>
<organism>
    <name type="scientific">Danio rerio</name>
    <name type="common">Zebrafish</name>
    <name type="synonym">Brachydanio rerio</name>
    <dbReference type="NCBI Taxonomy" id="7955"/>
    <lineage>
        <taxon>Eukaryota</taxon>
        <taxon>Metazoa</taxon>
        <taxon>Chordata</taxon>
        <taxon>Craniata</taxon>
        <taxon>Vertebrata</taxon>
        <taxon>Euteleostomi</taxon>
        <taxon>Actinopterygii</taxon>
        <taxon>Neopterygii</taxon>
        <taxon>Teleostei</taxon>
        <taxon>Ostariophysi</taxon>
        <taxon>Cypriniformes</taxon>
        <taxon>Danionidae</taxon>
        <taxon>Danioninae</taxon>
        <taxon>Danio</taxon>
    </lineage>
</organism>
<protein>
    <recommendedName>
        <fullName>General transcription and DNA repair factor IIH helicase/translocase subunit XPB</fullName>
        <shortName>TFIIH subunit XPB</shortName>
        <ecNumber evidence="7">5.6.2.4</ecNumber>
    </recommendedName>
    <alternativeName>
        <fullName evidence="7">DNA 3'-5' helicase/translocase XPB</fullName>
    </alternativeName>
    <alternativeName>
        <fullName>DNA excision repair protein ERCC-3</fullName>
    </alternativeName>
</protein>
<gene>
    <name type="primary">ercc3</name>
</gene>
<comment type="function">
    <text evidence="2">ATP-dependent 3'-5' DNA helicase/translocase; binds dsDNA rather than ssDNA, unzipping it in a translocase rather than classical helicase activity. Component of the general transcription and DNA repair factor IIH (TFIIH) core complex. When complexed to CDK-activating kinase (CAK), involved in RNA transcription by RNA polymerase II. The ATPase activity of XPB/ERCC3, but not its helicase activity, is required for DNA opening; it may wrap around the damaged DNA wedging it open, causing localized melting and twisting that allows XPD/ERCC2 helicase to anchor. The ATP-dependent helicase activity of XPB/ERCC3 may be required for promoter escape. Also involved in transcription-coupled nucleotide excision repair (NER) of damaged DNA. In NER, TFIIH acts by opening DNA around the lesion to allow the excision of the damaged oligonucleotide and its replacement by a new DNA fragment.</text>
</comment>
<comment type="catalytic activity">
    <reaction evidence="2">
        <text>Couples ATP hydrolysis with the unwinding of duplex DNA by translocating in the 3'-5' direction.</text>
        <dbReference type="EC" id="5.6.2.4"/>
    </reaction>
</comment>
<comment type="catalytic activity">
    <reaction evidence="2">
        <text>ATP + H2O = ADP + phosphate + H(+)</text>
        <dbReference type="Rhea" id="RHEA:13065"/>
        <dbReference type="ChEBI" id="CHEBI:15377"/>
        <dbReference type="ChEBI" id="CHEBI:15378"/>
        <dbReference type="ChEBI" id="CHEBI:30616"/>
        <dbReference type="ChEBI" id="CHEBI:43474"/>
        <dbReference type="ChEBI" id="CHEBI:456216"/>
        <dbReference type="EC" id="5.6.2.4"/>
    </reaction>
</comment>
<comment type="subunit">
    <text evidence="2">Component of the 7-subunit TFIIH core complex composed of XPB/ERCC3, XPD/ERCC2, GTF2H1, GTF2H2, GTF2H3, GTF2H4 and GTF2H5, which is active in NER. The core complex associates with the 3-subunit CDK-activating kinase (CAK) module composed of CCNH/cyclin H, CDK7 and MNAT1 to form the 10-subunit holoenzyme (holo-TFIIH) active in transcription. Interacts with PUF60. Interacts with ATF7IP. Interacts with Epstein-Barr virus EBNA2.</text>
</comment>
<comment type="subcellular location">
    <subcellularLocation>
        <location evidence="1">Nucleus</location>
    </subcellularLocation>
</comment>
<comment type="similarity">
    <text evidence="7">Belongs to the helicase family. RAD25/XPB subfamily.</text>
</comment>